<accession>Q9P8W0</accession>
<accession>A0A1D8PR71</accession>
<accession>Q3MP71</accession>
<accession>Q5A5A1</accession>
<sequence>MLYLILFLIAPIYAGLIFPTKPSSDPFYNPPKGFENAAVGDILQSRATPKSITGGFTPLKIQNSWQLLVRSEDSFGNPNVIVTTVIEPVNADPSKIASYQVFEDAAKADCAPSYALQFGSDLTTFVTQAEMYLMAPLLDQGYYVVSPDYEGPKSTFTIGKQSGQAVLNSIRAALKSGKITNIKDDAKVVMWGYSGGSLASGWAAALQPSYAPELGGNLLGAALGGFVTNITATAQATDGTVFAGIVANALGGVANEYPEFKSILQSDTDKKSVFDEFDGHCLIDGVLNYIGTSFLTGDHKIFKTGWDILKNPKIGKVVEDNGLVYQKQLVPKIPVFIYHGSIDQIVPIVDTKKTYQNWCDAGISSLEFAEDASNGHLTEAIMGAPAALTWIIDRFDGKQTVSGCQHIQRFSNLEYPNIPSSIANYFKAAMDVVLHLGLGPDVQKDQVSPEGIKKLGSIEMRWL</sequence>
<keyword id="KW-1015">Disulfide bond</keyword>
<keyword id="KW-0325">Glycoprotein</keyword>
<keyword id="KW-0378">Hydrolase</keyword>
<keyword id="KW-0442">Lipid degradation</keyword>
<keyword id="KW-0443">Lipid metabolism</keyword>
<keyword id="KW-1185">Reference proteome</keyword>
<keyword id="KW-0964">Secreted</keyword>
<keyword id="KW-0732">Signal</keyword>
<keyword id="KW-0843">Virulence</keyword>
<feature type="signal peptide" evidence="2">
    <location>
        <begin position="1"/>
        <end position="14"/>
    </location>
</feature>
<feature type="chain" id="PRO_0000017824" description="Lipase 5">
    <location>
        <begin position="15"/>
        <end position="463"/>
    </location>
</feature>
<feature type="active site" description="Charge relay system" evidence="1">
    <location>
        <position position="194"/>
    </location>
</feature>
<feature type="active site" description="Charge relay system" evidence="1">
    <location>
        <position position="343"/>
    </location>
</feature>
<feature type="active site" description="Charge relay system" evidence="1">
    <location>
        <position position="376"/>
    </location>
</feature>
<feature type="glycosylation site" description="N-linked (GlcNAc...) asparagine" evidence="2">
    <location>
        <position position="229"/>
    </location>
</feature>
<feature type="disulfide bond" evidence="1">
    <location>
        <begin position="110"/>
        <end position="281"/>
    </location>
</feature>
<feature type="disulfide bond" evidence="1">
    <location>
        <begin position="359"/>
        <end position="404"/>
    </location>
</feature>
<feature type="sequence conflict" description="In Ref. 1; AAF69522." evidence="7" ref="1">
    <original>D</original>
    <variation>E</variation>
    <location>
        <position position="275"/>
    </location>
</feature>
<evidence type="ECO:0000250" key="1">
    <source>
        <dbReference type="UniProtKB" id="W3VKA4"/>
    </source>
</evidence>
<evidence type="ECO:0000255" key="2"/>
<evidence type="ECO:0000269" key="3">
    <source>
    </source>
</evidence>
<evidence type="ECO:0000269" key="4">
    <source>
    </source>
</evidence>
<evidence type="ECO:0000269" key="5">
    <source>
    </source>
</evidence>
<evidence type="ECO:0000303" key="6">
    <source>
    </source>
</evidence>
<evidence type="ECO:0000305" key="7"/>
<evidence type="ECO:0000305" key="8">
    <source>
    </source>
</evidence>
<proteinExistence type="evidence at protein level"/>
<dbReference type="EC" id="3.1.1.3" evidence="5"/>
<dbReference type="EMBL" id="AF191318">
    <property type="protein sequence ID" value="AAF69522.1"/>
    <property type="molecule type" value="Genomic_DNA"/>
</dbReference>
<dbReference type="EMBL" id="AP006852">
    <property type="protein sequence ID" value="BAE44789.1"/>
    <property type="molecule type" value="Genomic_DNA"/>
</dbReference>
<dbReference type="EMBL" id="CP017629">
    <property type="protein sequence ID" value="AOW30630.1"/>
    <property type="molecule type" value="Genomic_DNA"/>
</dbReference>
<dbReference type="RefSeq" id="XP_717001.1">
    <property type="nucleotide sequence ID" value="XM_711908.1"/>
</dbReference>
<dbReference type="SMR" id="Q9P8W0"/>
<dbReference type="STRING" id="237561.Q9P8W0"/>
<dbReference type="ESTHER" id="canal-LIP5">
    <property type="family name" value="Fungal-Bact_LIP"/>
</dbReference>
<dbReference type="GlyCosmos" id="Q9P8W0">
    <property type="glycosylation" value="1 site, No reported glycans"/>
</dbReference>
<dbReference type="EnsemblFungi" id="C7_02830C_A-T">
    <property type="protein sequence ID" value="C7_02830C_A-T-p1"/>
    <property type="gene ID" value="C7_02830C_A"/>
</dbReference>
<dbReference type="GeneID" id="3641356"/>
<dbReference type="KEGG" id="cal:CAALFM_C702830CA"/>
<dbReference type="CGD" id="CAL0000176626">
    <property type="gene designation" value="LIP5"/>
</dbReference>
<dbReference type="VEuPathDB" id="FungiDB:C7_02830C_A"/>
<dbReference type="eggNOG" id="ENOG502SI7U">
    <property type="taxonomic scope" value="Eukaryota"/>
</dbReference>
<dbReference type="HOGENOM" id="CLU_029538_5_0_1"/>
<dbReference type="InParanoid" id="Q9P8W0"/>
<dbReference type="OrthoDB" id="2373480at2759"/>
<dbReference type="Proteomes" id="UP000000559">
    <property type="component" value="Chromosome 7"/>
</dbReference>
<dbReference type="GO" id="GO:0005576">
    <property type="term" value="C:extracellular region"/>
    <property type="evidence" value="ECO:0007669"/>
    <property type="project" value="UniProtKB-SubCell"/>
</dbReference>
<dbReference type="GO" id="GO:0016298">
    <property type="term" value="F:lipase activity"/>
    <property type="evidence" value="ECO:0000314"/>
    <property type="project" value="CGD"/>
</dbReference>
<dbReference type="GO" id="GO:0004806">
    <property type="term" value="F:triacylglycerol lipase activity"/>
    <property type="evidence" value="ECO:0007669"/>
    <property type="project" value="UniProtKB-EC"/>
</dbReference>
<dbReference type="GO" id="GO:0009267">
    <property type="term" value="P:cellular response to starvation"/>
    <property type="evidence" value="ECO:0000315"/>
    <property type="project" value="CGD"/>
</dbReference>
<dbReference type="GO" id="GO:0030447">
    <property type="term" value="P:filamentous growth"/>
    <property type="evidence" value="ECO:0000315"/>
    <property type="project" value="CGD"/>
</dbReference>
<dbReference type="GO" id="GO:0036180">
    <property type="term" value="P:filamentous growth of a population of unicellular organisms in response to biotic stimulus"/>
    <property type="evidence" value="ECO:0000315"/>
    <property type="project" value="CGD"/>
</dbReference>
<dbReference type="GO" id="GO:0036170">
    <property type="term" value="P:filamentous growth of a population of unicellular organisms in response to starvation"/>
    <property type="evidence" value="ECO:0000315"/>
    <property type="project" value="CGD"/>
</dbReference>
<dbReference type="GO" id="GO:0016042">
    <property type="term" value="P:lipid catabolic process"/>
    <property type="evidence" value="ECO:0007669"/>
    <property type="project" value="UniProtKB-KW"/>
</dbReference>
<dbReference type="FunFam" id="1.10.260.130:FF:000001">
    <property type="entry name" value="Lipase 2"/>
    <property type="match status" value="1"/>
</dbReference>
<dbReference type="Gene3D" id="1.10.260.130">
    <property type="match status" value="1"/>
</dbReference>
<dbReference type="Gene3D" id="3.40.50.1820">
    <property type="entry name" value="alpha/beta hydrolase"/>
    <property type="match status" value="1"/>
</dbReference>
<dbReference type="InterPro" id="IPR029058">
    <property type="entry name" value="AB_hydrolase_fold"/>
</dbReference>
<dbReference type="InterPro" id="IPR005152">
    <property type="entry name" value="Lipase_secreted"/>
</dbReference>
<dbReference type="PANTHER" id="PTHR34853">
    <property type="match status" value="1"/>
</dbReference>
<dbReference type="PANTHER" id="PTHR34853:SF1">
    <property type="entry name" value="LIPASE 5"/>
    <property type="match status" value="1"/>
</dbReference>
<dbReference type="Pfam" id="PF03583">
    <property type="entry name" value="LIP"/>
    <property type="match status" value="1"/>
</dbReference>
<dbReference type="PIRSF" id="PIRSF029171">
    <property type="entry name" value="Esterase_LipA"/>
    <property type="match status" value="1"/>
</dbReference>
<dbReference type="SUPFAM" id="SSF53474">
    <property type="entry name" value="alpha/beta-Hydrolases"/>
    <property type="match status" value="1"/>
</dbReference>
<comment type="function">
    <text evidence="3 5 8">Secreted lipase that is able to hydrolyze both the neutral triacylglycerols and the monopalmitate ester Tween 40, allowing the use of hydrolyzed products as carbon sources (PubMed:11131027, PubMed:21747717). Exhibits a preference for the short and medium chain length p-NP (C4 and C8 acyl group) esters rather than the long chain length p-NP esters (C12, C16 and C18 acyl group) (PubMed:21747717). Has broad lipolytic activity, which may be important for colonization and subsequent infection, therefore contributing to the persistence and virulence in human tissue (Probable).</text>
</comment>
<comment type="catalytic activity">
    <reaction evidence="5">
        <text>a triacylglycerol + H2O = a diacylglycerol + a fatty acid + H(+)</text>
        <dbReference type="Rhea" id="RHEA:12044"/>
        <dbReference type="ChEBI" id="CHEBI:15377"/>
        <dbReference type="ChEBI" id="CHEBI:15378"/>
        <dbReference type="ChEBI" id="CHEBI:17855"/>
        <dbReference type="ChEBI" id="CHEBI:18035"/>
        <dbReference type="ChEBI" id="CHEBI:28868"/>
        <dbReference type="EC" id="3.1.1.3"/>
    </reaction>
    <physiologicalReaction direction="left-to-right" evidence="5">
        <dbReference type="Rhea" id="RHEA:12045"/>
    </physiologicalReaction>
</comment>
<comment type="activity regulation">
    <text evidence="5">Fe(2)+, Fe(3+), Hg(2+) as well as ethylenediaminetetraacetic acid (EDTA) and phenylmethanesulfonyl fluoride (PMSF) strongly inhibit the lipase activity (PubMed:21747717). Surfactants such as Tween 20, Tween 80 and TritonX-100 show also inhibitory effect in the lipase activity (PubMed:21747717). Sodium dodecyl sulfate (SDS) sharply decreases the lipase activity by 85% (PubMed:21747717). Methanol, ethanol, and acetone have also negative effect on the lipase activity, with residual activities at 48%, 24% and 44% respectively (PubMed:21747717). Finally, lipase activity is almost lost in the presence of isopropanol alcohol (PubMed:21747717).</text>
</comment>
<comment type="biophysicochemical properties">
    <kinetics>
        <KM evidence="5">0.41 mM for p-NP-butyrate</KM>
        <KM evidence="5">0.27 mM for p-NP-caprylate</KM>
        <KM evidence="5">0.5 mM for p-NP-laurate</KM>
        <KM evidence="5">0.36 mM for p-NP-palmitate</KM>
        <Vmax evidence="5">1.2 mmol/min/mg enzyme towards p-NP-butyrate</Vmax>
        <Vmax evidence="5">1.22 mmol/min/mg enzyme towards p-NP-caprylate</Vmax>
        <Vmax evidence="5">0.2 mmol/min/mg enzyme towards p-NP-laurate</Vmax>
        <Vmax evidence="5">0.7 mmol/min/mg enzyme towards p-NP-palmitate</Vmax>
    </kinetics>
    <phDependence>
        <text evidence="5">Optimum pH is 5.0-6.0.</text>
    </phDependence>
    <temperatureDependence>
        <text evidence="5">Optimum temperature is 15-25 degrees Celsius.</text>
    </temperatureDependence>
</comment>
<comment type="subcellular location">
    <subcellularLocation>
        <location evidence="3">Secreted</location>
    </subcellularLocation>
</comment>
<comment type="induction">
    <text evidence="3 4 5">Cold-activated (PubMed:21747717). Expression is induced in medium containing Tween 40 as the sole source of carbon (PubMed:11131027). Expression is up-regulated during the yeast-to-hyphal transition (PubMed:11131027). Expressed during experimental infection of mice (PubMed:11131027). Expressed in host cecum and infected mucosal tissues (stomach, hard palate, esophagus and tongue) (PubMed:15766791). Expressed at all stages of mucosal and systemic infection (PubMed:15766791).</text>
</comment>
<comment type="similarity">
    <text evidence="7">Belongs to the AB hydrolase superfamily. Lipase family. Class Lip subfamily.</text>
</comment>
<reference key="1">
    <citation type="journal article" date="2000" name="Arch. Microbiol.">
        <title>Secreted lipases of Candida albicans: cloning, characterisation and expression analysis of a new gene family with at least ten members.</title>
        <authorList>
            <person name="Hube B."/>
            <person name="Stehr F."/>
            <person name="Bossenz M."/>
            <person name="Mazur A."/>
            <person name="Kretschmar M."/>
            <person name="Schaefer W."/>
        </authorList>
    </citation>
    <scope>NUCLEOTIDE SEQUENCE [GENOMIC DNA]</scope>
    <scope>SUBCELLULAR LOCATION</scope>
    <scope>FUNCTION</scope>
    <scope>INDUCTION</scope>
    <source>
        <strain>SC5314 / ATCC MYA-2876</strain>
    </source>
</reference>
<reference key="2">
    <citation type="journal article" date="2005" name="Genetics">
        <title>Sequence finishing and gene mapping for Candida albicans chromosome 7 and syntenic analysis against the Saccharomyces cerevisiae genome.</title>
        <authorList>
            <person name="Chibana H."/>
            <person name="Oka N."/>
            <person name="Nakayama H."/>
            <person name="Aoyama T."/>
            <person name="Magee B.B."/>
            <person name="Magee P.T."/>
            <person name="Mikami Y."/>
        </authorList>
    </citation>
    <scope>NUCLEOTIDE SEQUENCE [LARGE SCALE GENOMIC DNA]</scope>
    <source>
        <strain>SC5314 / ATCC MYA-2876</strain>
    </source>
</reference>
<reference key="3">
    <citation type="journal article" date="2004" name="Proc. Natl. Acad. Sci. U.S.A.">
        <title>The diploid genome sequence of Candida albicans.</title>
        <authorList>
            <person name="Jones T."/>
            <person name="Federspiel N.A."/>
            <person name="Chibana H."/>
            <person name="Dungan J."/>
            <person name="Kalman S."/>
            <person name="Magee B.B."/>
            <person name="Newport G."/>
            <person name="Thorstenson Y.R."/>
            <person name="Agabian N."/>
            <person name="Magee P.T."/>
            <person name="Davis R.W."/>
            <person name="Scherer S."/>
        </authorList>
    </citation>
    <scope>NUCLEOTIDE SEQUENCE [LARGE SCALE GENOMIC DNA]</scope>
    <source>
        <strain>SC5314 / ATCC MYA-2876</strain>
    </source>
</reference>
<reference key="4">
    <citation type="journal article" date="2007" name="Genome Biol.">
        <title>Assembly of the Candida albicans genome into sixteen supercontigs aligned on the eight chromosomes.</title>
        <authorList>
            <person name="van het Hoog M."/>
            <person name="Rast T.J."/>
            <person name="Martchenko M."/>
            <person name="Grindle S."/>
            <person name="Dignard D."/>
            <person name="Hogues H."/>
            <person name="Cuomo C."/>
            <person name="Berriman M."/>
            <person name="Scherer S."/>
            <person name="Magee B.B."/>
            <person name="Whiteway M."/>
            <person name="Chibana H."/>
            <person name="Nantel A."/>
            <person name="Magee P.T."/>
        </authorList>
    </citation>
    <scope>GENOME REANNOTATION</scope>
    <source>
        <strain>SC5314 / ATCC MYA-2876</strain>
    </source>
</reference>
<reference key="5">
    <citation type="journal article" date="2013" name="Genome Biol.">
        <title>Assembly of a phased diploid Candida albicans genome facilitates allele-specific measurements and provides a simple model for repeat and indel structure.</title>
        <authorList>
            <person name="Muzzey D."/>
            <person name="Schwartz K."/>
            <person name="Weissman J.S."/>
            <person name="Sherlock G."/>
        </authorList>
    </citation>
    <scope>NUCLEOTIDE SEQUENCE [LARGE SCALE GENOMIC DNA]</scope>
    <scope>GENOME REANNOTATION</scope>
    <source>
        <strain>SC5314 / ATCC MYA-2876</strain>
    </source>
</reference>
<reference key="6">
    <citation type="journal article" date="2004" name="FEMS Yeast Res.">
        <title>Expression analysis of the Candida albicans lipase gene family during experimental infections and in patient samples.</title>
        <authorList>
            <person name="Stehr F."/>
            <person name="Felk A."/>
            <person name="Gacser A."/>
            <person name="Kretschmar M."/>
            <person name="Maehnss B."/>
            <person name="Neuber K."/>
            <person name="Hube B."/>
            <person name="Schaefer W."/>
        </authorList>
    </citation>
    <scope>INDUCTION</scope>
</reference>
<reference key="7">
    <citation type="journal article" date="2005" name="FEMS Microbiol. Lett.">
        <title>Differential Candida albicans lipase gene expression during alimentary tract colonization and infection.</title>
        <authorList>
            <person name="Schofield D.A."/>
            <person name="Westwater C."/>
            <person name="Warner T."/>
            <person name="Balish E."/>
        </authorList>
    </citation>
    <scope>INDUCTION</scope>
</reference>
<reference key="8">
    <citation type="journal article" date="2011" name="Int. J. Mol. Sci.">
        <title>A novel cold-active lipase from Candida albicans: cloning, expression and characterization of the recombinant enzyme.</title>
        <authorList>
            <person name="Lan D.M."/>
            <person name="Yang N."/>
            <person name="Wang W.K."/>
            <person name="Shen Y.F."/>
            <person name="Yang B."/>
            <person name="Wang Y.H."/>
        </authorList>
    </citation>
    <scope>FUNCTION</scope>
    <scope>INDUCTION</scope>
    <scope>CATALYTIC ACTIVITY</scope>
    <scope>BIOPHYSICOCHEMICAL PROPERTIES</scope>
    <scope>ACTIVITY REGULATION</scope>
    <scope>SUBSTRATE SPECIFICITY</scope>
</reference>
<gene>
    <name evidence="6" type="primary">LIP5</name>
    <name type="ordered locus">CAALFM_C702830CA</name>
    <name type="ORF">CaJ7.0322</name>
    <name type="ORF">CaO19.12646</name>
    <name type="ORF">CaO19.5179</name>
</gene>
<name>LIP5_CANAL</name>
<organism>
    <name type="scientific">Candida albicans (strain SC5314 / ATCC MYA-2876)</name>
    <name type="common">Yeast</name>
    <dbReference type="NCBI Taxonomy" id="237561"/>
    <lineage>
        <taxon>Eukaryota</taxon>
        <taxon>Fungi</taxon>
        <taxon>Dikarya</taxon>
        <taxon>Ascomycota</taxon>
        <taxon>Saccharomycotina</taxon>
        <taxon>Pichiomycetes</taxon>
        <taxon>Debaryomycetaceae</taxon>
        <taxon>Candida/Lodderomyces clade</taxon>
        <taxon>Candida</taxon>
    </lineage>
</organism>
<protein>
    <recommendedName>
        <fullName evidence="6">Lipase 5</fullName>
        <ecNumber evidence="5">3.1.1.3</ecNumber>
    </recommendedName>
</protein>